<comment type="subcellular location">
    <subcellularLocation>
        <location evidence="1">Membrane</location>
        <topology evidence="3">Single-pass type I membrane protein</topology>
    </subcellularLocation>
</comment>
<comment type="mass spectrometry">
    <molecule>Brain peptide ITGQGNRIF</molecule>
</comment>
<comment type="mass spectrometry">
    <molecule>Brain peptide ITGQGNRIF</molecule>
</comment>
<proteinExistence type="evidence at protein level"/>
<feature type="signal peptide" evidence="1">
    <location>
        <begin position="1"/>
        <end position="19"/>
    </location>
</feature>
<feature type="chain" id="PRO_0000339283" description="Prohormone-3" evidence="1">
    <location>
        <begin position="20"/>
        <end position="314"/>
    </location>
</feature>
<feature type="peptide" id="PRO_0000339284" description="Brain peptide ITGQGNRIF">
    <location>
        <begin position="297"/>
        <end position="305"/>
    </location>
</feature>
<feature type="transmembrane region" description="Helical" evidence="1">
    <location>
        <begin position="90"/>
        <end position="112"/>
    </location>
</feature>
<sequence>MGRVLLSASSLLLHIQVFTRRLGNEYIEQDRPPCGTSGHPGSIRPTEMKTMTFGLNDEERAKHPRESEVLNENGAARFQQRYTHMGQKMYTCVALTVVALVSTMHFGVEAWGGLFNRFSPEMLSNLGYGSHGDHISKSGLYQRPLSTSYGYSYDSLEEVIPCYERKCTLNEHCCPGSICMNVDGDVGHCVFELGQKQGELCRNDNDCETGLMCAEVAGSETRSCQVPITSNKLYNEECNVSGECDISRGLCCQLQRRHRQTPRKVCSYFKDPLVCIGPVATDQIKSIVQYTSGEKRITGQGNRIFKRSLKAPFA</sequence>
<reference evidence="3" key="1">
    <citation type="submission" date="2010-11" db="EMBL/GenBank/DDBJ databases">
        <authorList>
            <consortium name="Honey bee genome project"/>
            <person name="Zhang L."/>
            <person name="Deng J."/>
            <person name="Wu Y.-Q."/>
            <person name="Kovar C."/>
            <person name="Aqrawi P."/>
            <person name="Bandaranaike D."/>
            <person name="Blankenburg K."/>
            <person name="Chen D."/>
            <person name="Denson S."/>
            <person name="Dinh H."/>
            <person name="Firestine M."/>
            <person name="Gross S."/>
            <person name="Han Y."/>
            <person name="Hernandez B."/>
            <person name="Holder M."/>
            <person name="Jackson L."/>
            <person name="Javaid M."/>
            <person name="Jing C."/>
            <person name="Jones J."/>
            <person name="Joshi V."/>
            <person name="Kamau G."/>
            <person name="Korchina V."/>
            <person name="Lee S."/>
            <person name="Lorensuhewa L."/>
            <person name="Mata R."/>
            <person name="Mathew T."/>
            <person name="Mims S."/>
            <person name="Ngo R."/>
            <person name="Nguyen L."/>
            <person name="Okwuonu G."/>
            <person name="Ongeri F."/>
            <person name="Osuji N."/>
            <person name="Pham C."/>
            <person name="Puazo M."/>
            <person name="Qu C."/>
            <person name="Quiroz J."/>
            <person name="Raj R."/>
            <person name="Rio Deiros D."/>
            <person name="Santibanez J."/>
            <person name="Scheel M."/>
            <person name="Scherer S."/>
            <person name="Vee V."/>
            <person name="Wang M."/>
            <person name="Xin Y."/>
            <person name="Richards S."/>
            <person name="Reid J.G."/>
            <person name="Newsham I."/>
            <person name="Worley K.C."/>
            <person name="Muzny D.M."/>
            <person name="Gibbs R."/>
        </authorList>
    </citation>
    <scope>NUCLEOTIDE SEQUENCE [LARGE SCALE GENOMIC DNA]</scope>
    <source>
        <strain>DH4</strain>
    </source>
</reference>
<reference evidence="3" key="2">
    <citation type="journal article" date="2006" name="Science">
        <title>From the genome to the proteome: uncovering peptides in the Apis brain.</title>
        <authorList>
            <person name="Hummon A.B."/>
            <person name="Richmond T.A."/>
            <person name="Verleyen P."/>
            <person name="Baggerman G."/>
            <person name="Huybrechts J."/>
            <person name="Ewing M.A."/>
            <person name="Vierstraete E."/>
            <person name="Rodriguez-Zas S.L."/>
            <person name="Schoofs L."/>
            <person name="Robinson G.E."/>
            <person name="Sweedler J.V."/>
        </authorList>
    </citation>
    <scope>PROTEIN SEQUENCE OF 297-305</scope>
    <scope>MASS SPECTROMETRY</scope>
    <source>
        <tissue evidence="2">Brain</tissue>
    </source>
</reference>
<evidence type="ECO:0000255" key="1"/>
<evidence type="ECO:0000269" key="2">
    <source>
    </source>
</evidence>
<evidence type="ECO:0000305" key="3"/>
<protein>
    <recommendedName>
        <fullName>Prohormone-3</fullName>
    </recommendedName>
    <component>
        <recommendedName>
            <fullName>Brain peptide ITGQGNRIF</fullName>
        </recommendedName>
    </component>
</protein>
<organism>
    <name type="scientific">Apis mellifera</name>
    <name type="common">Honeybee</name>
    <dbReference type="NCBI Taxonomy" id="7460"/>
    <lineage>
        <taxon>Eukaryota</taxon>
        <taxon>Metazoa</taxon>
        <taxon>Ecdysozoa</taxon>
        <taxon>Arthropoda</taxon>
        <taxon>Hexapoda</taxon>
        <taxon>Insecta</taxon>
        <taxon>Pterygota</taxon>
        <taxon>Neoptera</taxon>
        <taxon>Endopterygota</taxon>
        <taxon>Hymenoptera</taxon>
        <taxon>Apocrita</taxon>
        <taxon>Aculeata</taxon>
        <taxon>Apoidea</taxon>
        <taxon>Anthophila</taxon>
        <taxon>Apidae</taxon>
        <taxon>Apis</taxon>
    </lineage>
</organism>
<keyword id="KW-0165">Cleavage on pair of basic residues</keyword>
<keyword id="KW-0903">Direct protein sequencing</keyword>
<keyword id="KW-0472">Membrane</keyword>
<keyword id="KW-1185">Reference proteome</keyword>
<keyword id="KW-0732">Signal</keyword>
<keyword id="KW-0812">Transmembrane</keyword>
<keyword id="KW-1133">Transmembrane helix</keyword>
<accession>P85828</accession>
<name>PROH3_APIME</name>
<dbReference type="EMBL" id="AADG06002762">
    <property type="status" value="NOT_ANNOTATED_CDS"/>
    <property type="molecule type" value="Genomic_DNA"/>
</dbReference>
<dbReference type="FunCoup" id="P85828">
    <property type="interactions" value="2"/>
</dbReference>
<dbReference type="STRING" id="7460.P85828"/>
<dbReference type="PaxDb" id="7460-GB50651-PA"/>
<dbReference type="EnsemblMetazoa" id="XM_001122204">
    <property type="protein sequence ID" value="XP_001122204"/>
    <property type="gene ID" value="LOC726472"/>
</dbReference>
<dbReference type="eggNOG" id="ENOG502RYQ1">
    <property type="taxonomic scope" value="Eukaryota"/>
</dbReference>
<dbReference type="InParanoid" id="P85828"/>
<dbReference type="Proteomes" id="UP000005203">
    <property type="component" value="Unplaced"/>
</dbReference>
<dbReference type="GO" id="GO:0016020">
    <property type="term" value="C:membrane"/>
    <property type="evidence" value="ECO:0007669"/>
    <property type="project" value="UniProtKB-SubCell"/>
</dbReference>